<evidence type="ECO:0000255" key="1">
    <source>
        <dbReference type="HAMAP-Rule" id="MF_01302"/>
    </source>
</evidence>
<evidence type="ECO:0000305" key="2"/>
<sequence>MTMTDPIADFLTRLRNANSAYHDEVTLPHSKLKANIAQILKNEGYISDFRTEDARVGKSLIVQLKYGPSRERSIAGLRRVSKPGLRVYAKSTNLPRVLGGLGVAIISTSSGLLTDRQAARQGVGGEVLAYVW</sequence>
<proteinExistence type="inferred from homology"/>
<name>RS8_MYCPA</name>
<reference key="1">
    <citation type="journal article" date="2005" name="Proc. Natl. Acad. Sci. U.S.A.">
        <title>The complete genome sequence of Mycobacterium avium subspecies paratuberculosis.</title>
        <authorList>
            <person name="Li L."/>
            <person name="Bannantine J.P."/>
            <person name="Zhang Q."/>
            <person name="Amonsin A."/>
            <person name="May B.J."/>
            <person name="Alt D."/>
            <person name="Banerji N."/>
            <person name="Kanjilal S."/>
            <person name="Kapur V."/>
        </authorList>
    </citation>
    <scope>NUCLEOTIDE SEQUENCE [LARGE SCALE GENOMIC DNA]</scope>
    <source>
        <strain>ATCC BAA-968 / K-10</strain>
    </source>
</reference>
<feature type="chain" id="PRO_0000126444" description="Small ribosomal subunit protein uS8">
    <location>
        <begin position="1"/>
        <end position="132"/>
    </location>
</feature>
<accession>Q73S95</accession>
<comment type="function">
    <text evidence="1">One of the primary rRNA binding proteins, it binds directly to 16S rRNA central domain where it helps coordinate assembly of the platform of the 30S subunit.</text>
</comment>
<comment type="subunit">
    <text evidence="1">Part of the 30S ribosomal subunit. Contacts proteins S5 and S12.</text>
</comment>
<comment type="similarity">
    <text evidence="1">Belongs to the universal ribosomal protein uS8 family.</text>
</comment>
<dbReference type="EMBL" id="AE016958">
    <property type="protein sequence ID" value="AAS06731.1"/>
    <property type="molecule type" value="Genomic_DNA"/>
</dbReference>
<dbReference type="RefSeq" id="WP_003873498.1">
    <property type="nucleotide sequence ID" value="NZ_CP106873.1"/>
</dbReference>
<dbReference type="SMR" id="Q73S95"/>
<dbReference type="STRING" id="262316.MAP_4181"/>
<dbReference type="GeneID" id="75271965"/>
<dbReference type="KEGG" id="mpa:MAP_4181"/>
<dbReference type="eggNOG" id="COG0096">
    <property type="taxonomic scope" value="Bacteria"/>
</dbReference>
<dbReference type="HOGENOM" id="CLU_098428_0_1_11"/>
<dbReference type="Proteomes" id="UP000000580">
    <property type="component" value="Chromosome"/>
</dbReference>
<dbReference type="GO" id="GO:1990904">
    <property type="term" value="C:ribonucleoprotein complex"/>
    <property type="evidence" value="ECO:0007669"/>
    <property type="project" value="UniProtKB-KW"/>
</dbReference>
<dbReference type="GO" id="GO:0005840">
    <property type="term" value="C:ribosome"/>
    <property type="evidence" value="ECO:0007669"/>
    <property type="project" value="UniProtKB-KW"/>
</dbReference>
<dbReference type="GO" id="GO:0019843">
    <property type="term" value="F:rRNA binding"/>
    <property type="evidence" value="ECO:0007669"/>
    <property type="project" value="UniProtKB-UniRule"/>
</dbReference>
<dbReference type="GO" id="GO:0003735">
    <property type="term" value="F:structural constituent of ribosome"/>
    <property type="evidence" value="ECO:0007669"/>
    <property type="project" value="InterPro"/>
</dbReference>
<dbReference type="GO" id="GO:0006412">
    <property type="term" value="P:translation"/>
    <property type="evidence" value="ECO:0007669"/>
    <property type="project" value="UniProtKB-UniRule"/>
</dbReference>
<dbReference type="FunFam" id="3.30.1370.30:FF:000002">
    <property type="entry name" value="30S ribosomal protein S8"/>
    <property type="match status" value="1"/>
</dbReference>
<dbReference type="FunFam" id="3.30.1490.10:FF:000001">
    <property type="entry name" value="30S ribosomal protein S8"/>
    <property type="match status" value="1"/>
</dbReference>
<dbReference type="Gene3D" id="3.30.1370.30">
    <property type="match status" value="1"/>
</dbReference>
<dbReference type="Gene3D" id="3.30.1490.10">
    <property type="match status" value="1"/>
</dbReference>
<dbReference type="HAMAP" id="MF_01302_B">
    <property type="entry name" value="Ribosomal_uS8_B"/>
    <property type="match status" value="1"/>
</dbReference>
<dbReference type="InterPro" id="IPR000630">
    <property type="entry name" value="Ribosomal_uS8"/>
</dbReference>
<dbReference type="InterPro" id="IPR047863">
    <property type="entry name" value="Ribosomal_uS8_CS"/>
</dbReference>
<dbReference type="InterPro" id="IPR035987">
    <property type="entry name" value="Ribosomal_uS8_sf"/>
</dbReference>
<dbReference type="NCBIfam" id="NF001109">
    <property type="entry name" value="PRK00136.1"/>
    <property type="match status" value="1"/>
</dbReference>
<dbReference type="PANTHER" id="PTHR11758">
    <property type="entry name" value="40S RIBOSOMAL PROTEIN S15A"/>
    <property type="match status" value="1"/>
</dbReference>
<dbReference type="Pfam" id="PF00410">
    <property type="entry name" value="Ribosomal_S8"/>
    <property type="match status" value="1"/>
</dbReference>
<dbReference type="SUPFAM" id="SSF56047">
    <property type="entry name" value="Ribosomal protein S8"/>
    <property type="match status" value="1"/>
</dbReference>
<dbReference type="PROSITE" id="PS00053">
    <property type="entry name" value="RIBOSOMAL_S8"/>
    <property type="match status" value="1"/>
</dbReference>
<protein>
    <recommendedName>
        <fullName evidence="1">Small ribosomal subunit protein uS8</fullName>
    </recommendedName>
    <alternativeName>
        <fullName evidence="2">30S ribosomal protein S8</fullName>
    </alternativeName>
</protein>
<keyword id="KW-1185">Reference proteome</keyword>
<keyword id="KW-0687">Ribonucleoprotein</keyword>
<keyword id="KW-0689">Ribosomal protein</keyword>
<keyword id="KW-0694">RNA-binding</keyword>
<keyword id="KW-0699">rRNA-binding</keyword>
<organism>
    <name type="scientific">Mycolicibacterium paratuberculosis (strain ATCC BAA-968 / K-10)</name>
    <name type="common">Mycobacterium paratuberculosis</name>
    <dbReference type="NCBI Taxonomy" id="262316"/>
    <lineage>
        <taxon>Bacteria</taxon>
        <taxon>Bacillati</taxon>
        <taxon>Actinomycetota</taxon>
        <taxon>Actinomycetes</taxon>
        <taxon>Mycobacteriales</taxon>
        <taxon>Mycobacteriaceae</taxon>
        <taxon>Mycobacterium</taxon>
        <taxon>Mycobacterium avium complex (MAC)</taxon>
    </lineage>
</organism>
<gene>
    <name evidence="1" type="primary">rpsH</name>
    <name type="ordered locus">MAP_4181</name>
</gene>